<proteinExistence type="inferred from homology"/>
<comment type="similarity">
    <text evidence="1">Belongs to the universal ribosomal protein uS2 family.</text>
</comment>
<reference key="1">
    <citation type="journal article" date="2009" name="PLoS ONE">
        <title>Non mycobacterial virulence genes in the genome of the emerging pathogen Mycobacterium abscessus.</title>
        <authorList>
            <person name="Ripoll F."/>
            <person name="Pasek S."/>
            <person name="Schenowitz C."/>
            <person name="Dossat C."/>
            <person name="Barbe V."/>
            <person name="Rottman M."/>
            <person name="Macheras E."/>
            <person name="Heym B."/>
            <person name="Herrmann J.L."/>
            <person name="Daffe M."/>
            <person name="Brosch R."/>
            <person name="Risler J.L."/>
            <person name="Gaillard J.L."/>
        </authorList>
    </citation>
    <scope>NUCLEOTIDE SEQUENCE [LARGE SCALE GENOMIC DNA]</scope>
    <source>
        <strain>ATCC 19977 / DSM 44196 / CCUG 20993 / CIP 104536 / JCM 13569 / NCTC 13031 / TMC 1543 / L948</strain>
    </source>
</reference>
<protein>
    <recommendedName>
        <fullName evidence="1">Small ribosomal subunit protein uS2</fullName>
    </recommendedName>
    <alternativeName>
        <fullName evidence="3">30S ribosomal protein S2</fullName>
    </alternativeName>
</protein>
<gene>
    <name evidence="1" type="primary">rpsB</name>
    <name type="ordered locus">MAB_3196c</name>
</gene>
<dbReference type="EMBL" id="CU458896">
    <property type="protein sequence ID" value="CAM63273.1"/>
    <property type="molecule type" value="Genomic_DNA"/>
</dbReference>
<dbReference type="RefSeq" id="WP_005076880.1">
    <property type="nucleotide sequence ID" value="NZ_MLCG01000003.1"/>
</dbReference>
<dbReference type="SMR" id="B1MDF2"/>
<dbReference type="GeneID" id="93380129"/>
<dbReference type="KEGG" id="mab:MAB_3196c"/>
<dbReference type="Proteomes" id="UP000007137">
    <property type="component" value="Chromosome"/>
</dbReference>
<dbReference type="GO" id="GO:0022627">
    <property type="term" value="C:cytosolic small ribosomal subunit"/>
    <property type="evidence" value="ECO:0007669"/>
    <property type="project" value="TreeGrafter"/>
</dbReference>
<dbReference type="GO" id="GO:0003735">
    <property type="term" value="F:structural constituent of ribosome"/>
    <property type="evidence" value="ECO:0007669"/>
    <property type="project" value="InterPro"/>
</dbReference>
<dbReference type="GO" id="GO:0006412">
    <property type="term" value="P:translation"/>
    <property type="evidence" value="ECO:0007669"/>
    <property type="project" value="UniProtKB-UniRule"/>
</dbReference>
<dbReference type="CDD" id="cd01425">
    <property type="entry name" value="RPS2"/>
    <property type="match status" value="1"/>
</dbReference>
<dbReference type="FunFam" id="1.10.287.610:FF:000001">
    <property type="entry name" value="30S ribosomal protein S2"/>
    <property type="match status" value="1"/>
</dbReference>
<dbReference type="Gene3D" id="3.40.50.10490">
    <property type="entry name" value="Glucose-6-phosphate isomerase like protein, domain 1"/>
    <property type="match status" value="1"/>
</dbReference>
<dbReference type="Gene3D" id="1.10.287.610">
    <property type="entry name" value="Helix hairpin bin"/>
    <property type="match status" value="1"/>
</dbReference>
<dbReference type="HAMAP" id="MF_00291_B">
    <property type="entry name" value="Ribosomal_uS2_B"/>
    <property type="match status" value="1"/>
</dbReference>
<dbReference type="InterPro" id="IPR001865">
    <property type="entry name" value="Ribosomal_uS2"/>
</dbReference>
<dbReference type="InterPro" id="IPR005706">
    <property type="entry name" value="Ribosomal_uS2_bac/mit/plastid"/>
</dbReference>
<dbReference type="InterPro" id="IPR018130">
    <property type="entry name" value="Ribosomal_uS2_CS"/>
</dbReference>
<dbReference type="InterPro" id="IPR023591">
    <property type="entry name" value="Ribosomal_uS2_flav_dom_sf"/>
</dbReference>
<dbReference type="NCBIfam" id="TIGR01011">
    <property type="entry name" value="rpsB_bact"/>
    <property type="match status" value="1"/>
</dbReference>
<dbReference type="PANTHER" id="PTHR12534">
    <property type="entry name" value="30S RIBOSOMAL PROTEIN S2 PROKARYOTIC AND ORGANELLAR"/>
    <property type="match status" value="1"/>
</dbReference>
<dbReference type="PANTHER" id="PTHR12534:SF0">
    <property type="entry name" value="SMALL RIBOSOMAL SUBUNIT PROTEIN US2M"/>
    <property type="match status" value="1"/>
</dbReference>
<dbReference type="Pfam" id="PF00318">
    <property type="entry name" value="Ribosomal_S2"/>
    <property type="match status" value="1"/>
</dbReference>
<dbReference type="PRINTS" id="PR00395">
    <property type="entry name" value="RIBOSOMALS2"/>
</dbReference>
<dbReference type="SUPFAM" id="SSF52313">
    <property type="entry name" value="Ribosomal protein S2"/>
    <property type="match status" value="1"/>
</dbReference>
<dbReference type="PROSITE" id="PS00962">
    <property type="entry name" value="RIBOSOMAL_S2_1"/>
    <property type="match status" value="1"/>
</dbReference>
<dbReference type="PROSITE" id="PS00963">
    <property type="entry name" value="RIBOSOMAL_S2_2"/>
    <property type="match status" value="1"/>
</dbReference>
<accession>B1MDF2</accession>
<name>RS2_MYCA9</name>
<evidence type="ECO:0000255" key="1">
    <source>
        <dbReference type="HAMAP-Rule" id="MF_00291"/>
    </source>
</evidence>
<evidence type="ECO:0000256" key="2">
    <source>
        <dbReference type="SAM" id="MobiDB-lite"/>
    </source>
</evidence>
<evidence type="ECO:0000305" key="3"/>
<feature type="chain" id="PRO_1000115035" description="Small ribosomal subunit protein uS2">
    <location>
        <begin position="1"/>
        <end position="277"/>
    </location>
</feature>
<feature type="region of interest" description="Disordered" evidence="2">
    <location>
        <begin position="255"/>
        <end position="277"/>
    </location>
</feature>
<feature type="compositionally biased region" description="Low complexity" evidence="2">
    <location>
        <begin position="257"/>
        <end position="277"/>
    </location>
</feature>
<sequence>MAVVTMKQLLDSGAHFGHQTRRWNPKMKRFIFTDRNGIYIIDLQQTLTYIDKAYEFVKETVAHGGSVMFVGTKKQAQEPIAEEATRVGMPYVNQRWLGGMLTNFSTVHKRLQRLKELESMEQTGGFEGRTKKEILMLTREKNKLERSLGGIRDMQKVPSAIFVVDTNKEHLAVAEARKLNIPIIAILDTNCDPDVVDYPIPGNDDAIRSAALLTKVVASAIAEGLQARSGLAGGDEKPEAGEPLAEWEQELLASAVATTDEASAPSAAATETTTEEG</sequence>
<organism>
    <name type="scientific">Mycobacteroides abscessus (strain ATCC 19977 / DSM 44196 / CCUG 20993 / CIP 104536 / JCM 13569 / NCTC 13031 / TMC 1543 / L948)</name>
    <name type="common">Mycobacterium abscessus</name>
    <dbReference type="NCBI Taxonomy" id="561007"/>
    <lineage>
        <taxon>Bacteria</taxon>
        <taxon>Bacillati</taxon>
        <taxon>Actinomycetota</taxon>
        <taxon>Actinomycetes</taxon>
        <taxon>Mycobacteriales</taxon>
        <taxon>Mycobacteriaceae</taxon>
        <taxon>Mycobacteroides</taxon>
        <taxon>Mycobacteroides abscessus</taxon>
    </lineage>
</organism>
<keyword id="KW-1185">Reference proteome</keyword>
<keyword id="KW-0687">Ribonucleoprotein</keyword>
<keyword id="KW-0689">Ribosomal protein</keyword>